<gene>
    <name evidence="1" type="primary">lplA</name>
    <name type="ordered locus">ECIAI1_4609</name>
</gene>
<feature type="chain" id="PRO_1000148103" description="Lipoate-protein ligase A">
    <location>
        <begin position="1"/>
        <end position="338"/>
    </location>
</feature>
<feature type="domain" description="BPL/LPL catalytic" evidence="2">
    <location>
        <begin position="29"/>
        <end position="216"/>
    </location>
</feature>
<feature type="binding site" evidence="1">
    <location>
        <position position="71"/>
    </location>
    <ligand>
        <name>ATP</name>
        <dbReference type="ChEBI" id="CHEBI:30616"/>
    </ligand>
</feature>
<feature type="binding site" evidence="1">
    <location>
        <begin position="76"/>
        <end position="79"/>
    </location>
    <ligand>
        <name>ATP</name>
        <dbReference type="ChEBI" id="CHEBI:30616"/>
    </ligand>
</feature>
<feature type="binding site" evidence="1">
    <location>
        <position position="134"/>
    </location>
    <ligand>
        <name>(R)-lipoate</name>
        <dbReference type="ChEBI" id="CHEBI:83088"/>
    </ligand>
</feature>
<feature type="binding site" evidence="1">
    <location>
        <position position="134"/>
    </location>
    <ligand>
        <name>ATP</name>
        <dbReference type="ChEBI" id="CHEBI:30616"/>
    </ligand>
</feature>
<proteinExistence type="inferred from homology"/>
<reference key="1">
    <citation type="journal article" date="2009" name="PLoS Genet.">
        <title>Organised genome dynamics in the Escherichia coli species results in highly diverse adaptive paths.</title>
        <authorList>
            <person name="Touchon M."/>
            <person name="Hoede C."/>
            <person name="Tenaillon O."/>
            <person name="Barbe V."/>
            <person name="Baeriswyl S."/>
            <person name="Bidet P."/>
            <person name="Bingen E."/>
            <person name="Bonacorsi S."/>
            <person name="Bouchier C."/>
            <person name="Bouvet O."/>
            <person name="Calteau A."/>
            <person name="Chiapello H."/>
            <person name="Clermont O."/>
            <person name="Cruveiller S."/>
            <person name="Danchin A."/>
            <person name="Diard M."/>
            <person name="Dossat C."/>
            <person name="Karoui M.E."/>
            <person name="Frapy E."/>
            <person name="Garry L."/>
            <person name="Ghigo J.M."/>
            <person name="Gilles A.M."/>
            <person name="Johnson J."/>
            <person name="Le Bouguenec C."/>
            <person name="Lescat M."/>
            <person name="Mangenot S."/>
            <person name="Martinez-Jehanne V."/>
            <person name="Matic I."/>
            <person name="Nassif X."/>
            <person name="Oztas S."/>
            <person name="Petit M.A."/>
            <person name="Pichon C."/>
            <person name="Rouy Z."/>
            <person name="Ruf C.S."/>
            <person name="Schneider D."/>
            <person name="Tourret J."/>
            <person name="Vacherie B."/>
            <person name="Vallenet D."/>
            <person name="Medigue C."/>
            <person name="Rocha E.P.C."/>
            <person name="Denamur E."/>
        </authorList>
    </citation>
    <scope>NUCLEOTIDE SEQUENCE [LARGE SCALE GENOMIC DNA]</scope>
    <source>
        <strain>IAI1</strain>
    </source>
</reference>
<sequence>MSTLRLLISDSYDPWFNLAVEECIFRQMPATQRVLFLWRNADTVVIGRAQNPWKECNTRRMEEDNVRLARRSSGGGAVFHDLGNTCFTFMAGKPEYDKTISTSIVLNALNALGVSAEASGRNDLVVKTAEGDRKVSGSAYRETKDRGFHHGTLLLNADLSRLANYLNPDKKKLAAKGITSVRSRVTNLTELLPGITHEQVCEAITKAFFAHYGERVEAEIISPDKTPDLPNFAEIFARQSSWEWNFGQAPAFSHLLDERFSWGGVELHFDVEKGHITRAQVFTDSLNPAPLEALAGRLQGGLYRADMLQQECEALLVDFPDQEKELRELSTWIAGAVR</sequence>
<name>LPLA_ECO8A</name>
<protein>
    <recommendedName>
        <fullName evidence="1">Lipoate-protein ligase A</fullName>
        <ecNumber evidence="1">6.3.1.20</ecNumber>
    </recommendedName>
    <alternativeName>
        <fullName evidence="1">Lipoate--protein ligase</fullName>
    </alternativeName>
</protein>
<accession>B7LXU8</accession>
<evidence type="ECO:0000255" key="1">
    <source>
        <dbReference type="HAMAP-Rule" id="MF_01602"/>
    </source>
</evidence>
<evidence type="ECO:0000255" key="2">
    <source>
        <dbReference type="PROSITE-ProRule" id="PRU01067"/>
    </source>
</evidence>
<dbReference type="EC" id="6.3.1.20" evidence="1"/>
<dbReference type="EMBL" id="CU928160">
    <property type="protein sequence ID" value="CAR01349.1"/>
    <property type="molecule type" value="Genomic_DNA"/>
</dbReference>
<dbReference type="RefSeq" id="WP_000105859.1">
    <property type="nucleotide sequence ID" value="NC_011741.1"/>
</dbReference>
<dbReference type="SMR" id="B7LXU8"/>
<dbReference type="KEGG" id="ecr:ECIAI1_4609"/>
<dbReference type="HOGENOM" id="CLU_022986_0_1_6"/>
<dbReference type="UniPathway" id="UPA00537">
    <property type="reaction ID" value="UER00594"/>
</dbReference>
<dbReference type="UniPathway" id="UPA00537">
    <property type="reaction ID" value="UER00595"/>
</dbReference>
<dbReference type="GO" id="GO:0005829">
    <property type="term" value="C:cytosol"/>
    <property type="evidence" value="ECO:0007669"/>
    <property type="project" value="TreeGrafter"/>
</dbReference>
<dbReference type="GO" id="GO:0005524">
    <property type="term" value="F:ATP binding"/>
    <property type="evidence" value="ECO:0007669"/>
    <property type="project" value="UniProtKB-KW"/>
</dbReference>
<dbReference type="GO" id="GO:0016979">
    <property type="term" value="F:lipoate-protein ligase activity"/>
    <property type="evidence" value="ECO:0007669"/>
    <property type="project" value="UniProtKB-UniRule"/>
</dbReference>
<dbReference type="GO" id="GO:0017118">
    <property type="term" value="F:lipoyltransferase activity"/>
    <property type="evidence" value="ECO:0007669"/>
    <property type="project" value="TreeGrafter"/>
</dbReference>
<dbReference type="GO" id="GO:0036211">
    <property type="term" value="P:protein modification process"/>
    <property type="evidence" value="ECO:0007669"/>
    <property type="project" value="InterPro"/>
</dbReference>
<dbReference type="CDD" id="cd16435">
    <property type="entry name" value="BPL_LplA_LipB"/>
    <property type="match status" value="1"/>
</dbReference>
<dbReference type="FunFam" id="3.30.390.50:FF:000002">
    <property type="entry name" value="Lipoate-protein ligase A"/>
    <property type="match status" value="1"/>
</dbReference>
<dbReference type="FunFam" id="3.30.930.10:FF:000024">
    <property type="entry name" value="Lipoate-protein ligase A"/>
    <property type="match status" value="1"/>
</dbReference>
<dbReference type="Gene3D" id="3.30.930.10">
    <property type="entry name" value="Bira Bifunctional Protein, Domain 2"/>
    <property type="match status" value="1"/>
</dbReference>
<dbReference type="Gene3D" id="3.30.390.50">
    <property type="entry name" value="CO dehydrogenase flavoprotein, C-terminal domain"/>
    <property type="match status" value="1"/>
</dbReference>
<dbReference type="HAMAP" id="MF_01602">
    <property type="entry name" value="LplA"/>
    <property type="match status" value="1"/>
</dbReference>
<dbReference type="InterPro" id="IPR045864">
    <property type="entry name" value="aa-tRNA-synth_II/BPL/LPL"/>
</dbReference>
<dbReference type="InterPro" id="IPR004143">
    <property type="entry name" value="BPL_LPL_catalytic"/>
</dbReference>
<dbReference type="InterPro" id="IPR023741">
    <property type="entry name" value="Lipoate_ligase_A"/>
</dbReference>
<dbReference type="InterPro" id="IPR019491">
    <property type="entry name" value="Lipoate_protein_ligase_C"/>
</dbReference>
<dbReference type="InterPro" id="IPR004562">
    <property type="entry name" value="LipoylTrfase_LipoateP_Ligase"/>
</dbReference>
<dbReference type="NCBIfam" id="TIGR00545">
    <property type="entry name" value="lipoyltrans"/>
    <property type="match status" value="1"/>
</dbReference>
<dbReference type="PANTHER" id="PTHR12561">
    <property type="entry name" value="LIPOATE-PROTEIN LIGASE"/>
    <property type="match status" value="1"/>
</dbReference>
<dbReference type="PANTHER" id="PTHR12561:SF3">
    <property type="entry name" value="LIPOYLTRANSFERASE 1, MITOCHONDRIAL"/>
    <property type="match status" value="1"/>
</dbReference>
<dbReference type="Pfam" id="PF10437">
    <property type="entry name" value="Lip_prot_lig_C"/>
    <property type="match status" value="1"/>
</dbReference>
<dbReference type="Pfam" id="PF21948">
    <property type="entry name" value="LplA-B_cat"/>
    <property type="match status" value="1"/>
</dbReference>
<dbReference type="SUPFAM" id="SSF55681">
    <property type="entry name" value="Class II aaRS and biotin synthetases"/>
    <property type="match status" value="1"/>
</dbReference>
<dbReference type="SUPFAM" id="SSF82649">
    <property type="entry name" value="SufE/NifU"/>
    <property type="match status" value="1"/>
</dbReference>
<dbReference type="PROSITE" id="PS51733">
    <property type="entry name" value="BPL_LPL_CATALYTIC"/>
    <property type="match status" value="1"/>
</dbReference>
<comment type="function">
    <text evidence="1">Catalyzes both the ATP-dependent activation of exogenously supplied lipoate to lipoyl-AMP and the transfer of the activated lipoyl onto the lipoyl domains of lipoate-dependent enzymes.</text>
</comment>
<comment type="catalytic activity">
    <reaction evidence="1">
        <text>L-lysyl-[lipoyl-carrier protein] + (R)-lipoate + ATP = N(6)-[(R)-lipoyl]-L-lysyl-[lipoyl-carrier protein] + AMP + diphosphate + H(+)</text>
        <dbReference type="Rhea" id="RHEA:49288"/>
        <dbReference type="Rhea" id="RHEA-COMP:10500"/>
        <dbReference type="Rhea" id="RHEA-COMP:10502"/>
        <dbReference type="ChEBI" id="CHEBI:15378"/>
        <dbReference type="ChEBI" id="CHEBI:29969"/>
        <dbReference type="ChEBI" id="CHEBI:30616"/>
        <dbReference type="ChEBI" id="CHEBI:33019"/>
        <dbReference type="ChEBI" id="CHEBI:83088"/>
        <dbReference type="ChEBI" id="CHEBI:83099"/>
        <dbReference type="ChEBI" id="CHEBI:456215"/>
        <dbReference type="EC" id="6.3.1.20"/>
    </reaction>
</comment>
<comment type="pathway">
    <text evidence="1">Protein modification; protein lipoylation via exogenous pathway; protein N(6)-(lipoyl)lysine from lipoate: step 1/2.</text>
</comment>
<comment type="pathway">
    <text evidence="1">Protein modification; protein lipoylation via exogenous pathway; protein N(6)-(lipoyl)lysine from lipoate: step 2/2.</text>
</comment>
<comment type="subunit">
    <text evidence="1">Monomer.</text>
</comment>
<comment type="subcellular location">
    <subcellularLocation>
        <location evidence="1">Cytoplasm</location>
    </subcellularLocation>
</comment>
<comment type="miscellaneous">
    <text evidence="1">In the transfer reaction, the free carboxyl group of lipoic acid is attached via an amide linkage to the epsilon-amino group of a specific lysine residue of lipoyl domains of lipoate-dependent enzymes.</text>
</comment>
<comment type="similarity">
    <text evidence="1">Belongs to the LplA family.</text>
</comment>
<organism>
    <name type="scientific">Escherichia coli O8 (strain IAI1)</name>
    <dbReference type="NCBI Taxonomy" id="585034"/>
    <lineage>
        <taxon>Bacteria</taxon>
        <taxon>Pseudomonadati</taxon>
        <taxon>Pseudomonadota</taxon>
        <taxon>Gammaproteobacteria</taxon>
        <taxon>Enterobacterales</taxon>
        <taxon>Enterobacteriaceae</taxon>
        <taxon>Escherichia</taxon>
    </lineage>
</organism>
<keyword id="KW-0067">ATP-binding</keyword>
<keyword id="KW-0963">Cytoplasm</keyword>
<keyword id="KW-0436">Ligase</keyword>
<keyword id="KW-0547">Nucleotide-binding</keyword>